<proteinExistence type="evidence at transcript level"/>
<name>MUB4_ORYSJ</name>
<evidence type="ECO:0000250" key="1">
    <source>
        <dbReference type="UniProtKB" id="Q9LSD8"/>
    </source>
</evidence>
<evidence type="ECO:0000256" key="2">
    <source>
        <dbReference type="SAM" id="MobiDB-lite"/>
    </source>
</evidence>
<evidence type="ECO:0000305" key="3"/>
<evidence type="ECO:0000312" key="4">
    <source>
        <dbReference type="EMBL" id="EEE60909.1"/>
    </source>
</evidence>
<gene>
    <name type="primary">MUB4</name>
    <name type="ordered locus">Os04g0393300</name>
    <name type="ordered locus">LOC_Os04g32270</name>
    <name evidence="4" type="ORF">OsJ_14610</name>
    <name type="ORF">OSJNBa0055C08.14</name>
</gene>
<keyword id="KW-1003">Cell membrane</keyword>
<keyword id="KW-0449">Lipoprotein</keyword>
<keyword id="KW-0472">Membrane</keyword>
<keyword id="KW-0488">Methylation</keyword>
<keyword id="KW-0636">Prenylation</keyword>
<keyword id="KW-1185">Reference proteome</keyword>
<accession>Q7XRU4</accession>
<accession>Q0JDM5</accession>
<sequence length="135" mass="14437">MAEKEEGKVAAEGGAEAEADEEVEVKFRLFDGSDIGPLRCNAVATTVAALKDRVVADWPKDKTIVPKTANDVKLISGGKILENDKNIAQCRAPFGDLPSTAITMHVVVQPSSAKSKPDKKTNKLPKTTRCSCTIL</sequence>
<reference key="1">
    <citation type="journal article" date="2002" name="Nature">
        <title>Sequence and analysis of rice chromosome 4.</title>
        <authorList>
            <person name="Feng Q."/>
            <person name="Zhang Y."/>
            <person name="Hao P."/>
            <person name="Wang S."/>
            <person name="Fu G."/>
            <person name="Huang Y."/>
            <person name="Li Y."/>
            <person name="Zhu J."/>
            <person name="Liu Y."/>
            <person name="Hu X."/>
            <person name="Jia P."/>
            <person name="Zhang Y."/>
            <person name="Zhao Q."/>
            <person name="Ying K."/>
            <person name="Yu S."/>
            <person name="Tang Y."/>
            <person name="Weng Q."/>
            <person name="Zhang L."/>
            <person name="Lu Y."/>
            <person name="Mu J."/>
            <person name="Lu Y."/>
            <person name="Zhang L.S."/>
            <person name="Yu Z."/>
            <person name="Fan D."/>
            <person name="Liu X."/>
            <person name="Lu T."/>
            <person name="Li C."/>
            <person name="Wu Y."/>
            <person name="Sun T."/>
            <person name="Lei H."/>
            <person name="Li T."/>
            <person name="Hu H."/>
            <person name="Guan J."/>
            <person name="Wu M."/>
            <person name="Zhang R."/>
            <person name="Zhou B."/>
            <person name="Chen Z."/>
            <person name="Chen L."/>
            <person name="Jin Z."/>
            <person name="Wang R."/>
            <person name="Yin H."/>
            <person name="Cai Z."/>
            <person name="Ren S."/>
            <person name="Lv G."/>
            <person name="Gu W."/>
            <person name="Zhu G."/>
            <person name="Tu Y."/>
            <person name="Jia J."/>
            <person name="Zhang Y."/>
            <person name="Chen J."/>
            <person name="Kang H."/>
            <person name="Chen X."/>
            <person name="Shao C."/>
            <person name="Sun Y."/>
            <person name="Hu Q."/>
            <person name="Zhang X."/>
            <person name="Zhang W."/>
            <person name="Wang L."/>
            <person name="Ding C."/>
            <person name="Sheng H."/>
            <person name="Gu J."/>
            <person name="Chen S."/>
            <person name="Ni L."/>
            <person name="Zhu F."/>
            <person name="Chen W."/>
            <person name="Lan L."/>
            <person name="Lai Y."/>
            <person name="Cheng Z."/>
            <person name="Gu M."/>
            <person name="Jiang J."/>
            <person name="Li J."/>
            <person name="Hong G."/>
            <person name="Xue Y."/>
            <person name="Han B."/>
        </authorList>
    </citation>
    <scope>NUCLEOTIDE SEQUENCE [LARGE SCALE GENOMIC DNA]</scope>
    <source>
        <strain>cv. Nipponbare</strain>
    </source>
</reference>
<reference key="2">
    <citation type="journal article" date="2005" name="Nature">
        <title>The map-based sequence of the rice genome.</title>
        <authorList>
            <consortium name="International rice genome sequencing project (IRGSP)"/>
        </authorList>
    </citation>
    <scope>NUCLEOTIDE SEQUENCE [LARGE SCALE GENOMIC DNA]</scope>
    <source>
        <strain>cv. Nipponbare</strain>
    </source>
</reference>
<reference key="3">
    <citation type="journal article" date="2008" name="Nucleic Acids Res.">
        <title>The rice annotation project database (RAP-DB): 2008 update.</title>
        <authorList>
            <consortium name="The rice annotation project (RAP)"/>
        </authorList>
    </citation>
    <scope>GENOME REANNOTATION</scope>
    <source>
        <strain>cv. Nipponbare</strain>
    </source>
</reference>
<reference key="4">
    <citation type="journal article" date="2013" name="Rice">
        <title>Improvement of the Oryza sativa Nipponbare reference genome using next generation sequence and optical map data.</title>
        <authorList>
            <person name="Kawahara Y."/>
            <person name="de la Bastide M."/>
            <person name="Hamilton J.P."/>
            <person name="Kanamori H."/>
            <person name="McCombie W.R."/>
            <person name="Ouyang S."/>
            <person name="Schwartz D.C."/>
            <person name="Tanaka T."/>
            <person name="Wu J."/>
            <person name="Zhou S."/>
            <person name="Childs K.L."/>
            <person name="Davidson R.M."/>
            <person name="Lin H."/>
            <person name="Quesada-Ocampo L."/>
            <person name="Vaillancourt B."/>
            <person name="Sakai H."/>
            <person name="Lee S.S."/>
            <person name="Kim J."/>
            <person name="Numa H."/>
            <person name="Itoh T."/>
            <person name="Buell C.R."/>
            <person name="Matsumoto T."/>
        </authorList>
    </citation>
    <scope>GENOME REANNOTATION</scope>
    <source>
        <strain>cv. Nipponbare</strain>
    </source>
</reference>
<reference key="5">
    <citation type="journal article" date="2005" name="PLoS Biol.">
        <title>The genomes of Oryza sativa: a history of duplications.</title>
        <authorList>
            <person name="Yu J."/>
            <person name="Wang J."/>
            <person name="Lin W."/>
            <person name="Li S."/>
            <person name="Li H."/>
            <person name="Zhou J."/>
            <person name="Ni P."/>
            <person name="Dong W."/>
            <person name="Hu S."/>
            <person name="Zeng C."/>
            <person name="Zhang J."/>
            <person name="Zhang Y."/>
            <person name="Li R."/>
            <person name="Xu Z."/>
            <person name="Li S."/>
            <person name="Li X."/>
            <person name="Zheng H."/>
            <person name="Cong L."/>
            <person name="Lin L."/>
            <person name="Yin J."/>
            <person name="Geng J."/>
            <person name="Li G."/>
            <person name="Shi J."/>
            <person name="Liu J."/>
            <person name="Lv H."/>
            <person name="Li J."/>
            <person name="Wang J."/>
            <person name="Deng Y."/>
            <person name="Ran L."/>
            <person name="Shi X."/>
            <person name="Wang X."/>
            <person name="Wu Q."/>
            <person name="Li C."/>
            <person name="Ren X."/>
            <person name="Wang J."/>
            <person name="Wang X."/>
            <person name="Li D."/>
            <person name="Liu D."/>
            <person name="Zhang X."/>
            <person name="Ji Z."/>
            <person name="Zhao W."/>
            <person name="Sun Y."/>
            <person name="Zhang Z."/>
            <person name="Bao J."/>
            <person name="Han Y."/>
            <person name="Dong L."/>
            <person name="Ji J."/>
            <person name="Chen P."/>
            <person name="Wu S."/>
            <person name="Liu J."/>
            <person name="Xiao Y."/>
            <person name="Bu D."/>
            <person name="Tan J."/>
            <person name="Yang L."/>
            <person name="Ye C."/>
            <person name="Zhang J."/>
            <person name="Xu J."/>
            <person name="Zhou Y."/>
            <person name="Yu Y."/>
            <person name="Zhang B."/>
            <person name="Zhuang S."/>
            <person name="Wei H."/>
            <person name="Liu B."/>
            <person name="Lei M."/>
            <person name="Yu H."/>
            <person name="Li Y."/>
            <person name="Xu H."/>
            <person name="Wei S."/>
            <person name="He X."/>
            <person name="Fang L."/>
            <person name="Zhang Z."/>
            <person name="Zhang Y."/>
            <person name="Huang X."/>
            <person name="Su Z."/>
            <person name="Tong W."/>
            <person name="Li J."/>
            <person name="Tong Z."/>
            <person name="Li S."/>
            <person name="Ye J."/>
            <person name="Wang L."/>
            <person name="Fang L."/>
            <person name="Lei T."/>
            <person name="Chen C.-S."/>
            <person name="Chen H.-C."/>
            <person name="Xu Z."/>
            <person name="Li H."/>
            <person name="Huang H."/>
            <person name="Zhang F."/>
            <person name="Xu H."/>
            <person name="Li N."/>
            <person name="Zhao C."/>
            <person name="Li S."/>
            <person name="Dong L."/>
            <person name="Huang Y."/>
            <person name="Li L."/>
            <person name="Xi Y."/>
            <person name="Qi Q."/>
            <person name="Li W."/>
            <person name="Zhang B."/>
            <person name="Hu W."/>
            <person name="Zhang Y."/>
            <person name="Tian X."/>
            <person name="Jiao Y."/>
            <person name="Liang X."/>
            <person name="Jin J."/>
            <person name="Gao L."/>
            <person name="Zheng W."/>
            <person name="Hao B."/>
            <person name="Liu S.-M."/>
            <person name="Wang W."/>
            <person name="Yuan L."/>
            <person name="Cao M."/>
            <person name="McDermott J."/>
            <person name="Samudrala R."/>
            <person name="Wang J."/>
            <person name="Wong G.K.-S."/>
            <person name="Yang H."/>
        </authorList>
    </citation>
    <scope>NUCLEOTIDE SEQUENCE [LARGE SCALE GENOMIC DNA]</scope>
    <source>
        <strain>cv. Nipponbare</strain>
    </source>
</reference>
<reference key="6">
    <citation type="journal article" date="2003" name="Science">
        <title>Collection, mapping, and annotation of over 28,000 cDNA clones from japonica rice.</title>
        <authorList>
            <consortium name="The rice full-length cDNA consortium"/>
        </authorList>
    </citation>
    <scope>NUCLEOTIDE SEQUENCE [LARGE SCALE MRNA]</scope>
    <source>
        <strain>cv. Nipponbare</strain>
    </source>
</reference>
<reference key="7">
    <citation type="journal article" date="2006" name="J. Biol. Chem.">
        <title>MUBS: a family of ubiquitin-fold proteins that are plasma membrane-anchored by prenylation.</title>
        <authorList>
            <person name="Downes B.P."/>
            <person name="Saracco S.A."/>
            <person name="Lee S.S."/>
            <person name="Crowell D.N."/>
            <person name="Vierstra R.D."/>
        </authorList>
    </citation>
    <scope>IDENTIFICATION</scope>
    <scope>NOMENCLATURE</scope>
</reference>
<protein>
    <recommendedName>
        <fullName>Membrane-anchored ubiquitin-fold protein 4</fullName>
        <shortName>Membrane-anchored ub-fold protein 4</shortName>
    </recommendedName>
    <alternativeName>
        <fullName>OsMUB4</fullName>
    </alternativeName>
</protein>
<organism>
    <name type="scientific">Oryza sativa subsp. japonica</name>
    <name type="common">Rice</name>
    <dbReference type="NCBI Taxonomy" id="39947"/>
    <lineage>
        <taxon>Eukaryota</taxon>
        <taxon>Viridiplantae</taxon>
        <taxon>Streptophyta</taxon>
        <taxon>Embryophyta</taxon>
        <taxon>Tracheophyta</taxon>
        <taxon>Spermatophyta</taxon>
        <taxon>Magnoliopsida</taxon>
        <taxon>Liliopsida</taxon>
        <taxon>Poales</taxon>
        <taxon>Poaceae</taxon>
        <taxon>BOP clade</taxon>
        <taxon>Oryzoideae</taxon>
        <taxon>Oryzeae</taxon>
        <taxon>Oryzinae</taxon>
        <taxon>Oryza</taxon>
        <taxon>Oryza sativa</taxon>
    </lineage>
</organism>
<dbReference type="EMBL" id="AL731600">
    <property type="protein sequence ID" value="CAE02286.2"/>
    <property type="molecule type" value="Genomic_DNA"/>
</dbReference>
<dbReference type="EMBL" id="AP008210">
    <property type="protein sequence ID" value="BAF14562.1"/>
    <property type="molecule type" value="Genomic_DNA"/>
</dbReference>
<dbReference type="EMBL" id="AP014960">
    <property type="protein sequence ID" value="BAS88983.1"/>
    <property type="molecule type" value="Genomic_DNA"/>
</dbReference>
<dbReference type="EMBL" id="CM000141">
    <property type="protein sequence ID" value="EEE60909.1"/>
    <property type="molecule type" value="Genomic_DNA"/>
</dbReference>
<dbReference type="EMBL" id="AK059881">
    <property type="protein sequence ID" value="BAG87188.1"/>
    <property type="molecule type" value="mRNA"/>
</dbReference>
<dbReference type="EMBL" id="AK099168">
    <property type="protein sequence ID" value="BAG93968.1"/>
    <property type="molecule type" value="mRNA"/>
</dbReference>
<dbReference type="EMBL" id="AK104201">
    <property type="protein sequence ID" value="BAG96499.1"/>
    <property type="molecule type" value="mRNA"/>
</dbReference>
<dbReference type="RefSeq" id="XP_015637144.1">
    <property type="nucleotide sequence ID" value="XM_015781658.1"/>
</dbReference>
<dbReference type="SMR" id="Q7XRU4"/>
<dbReference type="FunCoup" id="Q7XRU4">
    <property type="interactions" value="1125"/>
</dbReference>
<dbReference type="STRING" id="39947.Q7XRU4"/>
<dbReference type="PaxDb" id="39947-Q7XRU4"/>
<dbReference type="EnsemblPlants" id="Os04t0393300-01">
    <property type="protein sequence ID" value="Os04t0393300-01"/>
    <property type="gene ID" value="Os04g0393300"/>
</dbReference>
<dbReference type="Gramene" id="Os04t0393300-01">
    <property type="protein sequence ID" value="Os04t0393300-01"/>
    <property type="gene ID" value="Os04g0393300"/>
</dbReference>
<dbReference type="KEGG" id="dosa:Os04g0393300"/>
<dbReference type="eggNOG" id="ENOG502RZE2">
    <property type="taxonomic scope" value="Eukaryota"/>
</dbReference>
<dbReference type="HOGENOM" id="CLU_136465_0_0_1"/>
<dbReference type="InParanoid" id="Q7XRU4"/>
<dbReference type="OMA" id="HICACSI"/>
<dbReference type="OrthoDB" id="1043111at2759"/>
<dbReference type="Proteomes" id="UP000000763">
    <property type="component" value="Chromosome 4"/>
</dbReference>
<dbReference type="Proteomes" id="UP000007752">
    <property type="component" value="Chromosome 4"/>
</dbReference>
<dbReference type="Proteomes" id="UP000059680">
    <property type="component" value="Chromosome 4"/>
</dbReference>
<dbReference type="ExpressionAtlas" id="Q7XRU4">
    <property type="expression patterns" value="baseline and differential"/>
</dbReference>
<dbReference type="GO" id="GO:0005886">
    <property type="term" value="C:plasma membrane"/>
    <property type="evidence" value="ECO:0007669"/>
    <property type="project" value="UniProtKB-SubCell"/>
</dbReference>
<dbReference type="CDD" id="cd01814">
    <property type="entry name" value="Ubl_MUBs_plant"/>
    <property type="match status" value="1"/>
</dbReference>
<dbReference type="Gene3D" id="3.10.20.90">
    <property type="entry name" value="Phosphatidylinositol 3-kinase Catalytic Subunit, Chain A, domain 1"/>
    <property type="match status" value="1"/>
</dbReference>
<dbReference type="InterPro" id="IPR017000">
    <property type="entry name" value="MUB"/>
</dbReference>
<dbReference type="InterPro" id="IPR029071">
    <property type="entry name" value="Ubiquitin-like_domsf"/>
</dbReference>
<dbReference type="InterPro" id="IPR040015">
    <property type="entry name" value="UBL3-like"/>
</dbReference>
<dbReference type="InterPro" id="IPR039540">
    <property type="entry name" value="UBL3-like_ubiquitin_dom"/>
</dbReference>
<dbReference type="PANTHER" id="PTHR13169:SF1">
    <property type="entry name" value="MEMBRANE-ANCHORED UBIQUITIN-FOLD PROTEIN 4"/>
    <property type="match status" value="1"/>
</dbReference>
<dbReference type="PANTHER" id="PTHR13169">
    <property type="entry name" value="UBIQUITIN-LIKE PROTEIN 3 HCG-1 PROTEIN"/>
    <property type="match status" value="1"/>
</dbReference>
<dbReference type="Pfam" id="PF13881">
    <property type="entry name" value="Rad60-SLD_2"/>
    <property type="match status" value="1"/>
</dbReference>
<dbReference type="PIRSF" id="PIRSF032572">
    <property type="entry name" value="MUB"/>
    <property type="match status" value="1"/>
</dbReference>
<dbReference type="SUPFAM" id="SSF54236">
    <property type="entry name" value="Ubiquitin-like"/>
    <property type="match status" value="1"/>
</dbReference>
<feature type="chain" id="PRO_0000248179" description="Membrane-anchored ubiquitin-fold protein 4">
    <location>
        <begin position="1"/>
        <end position="132"/>
    </location>
</feature>
<feature type="propeptide" id="PRO_0000248180" description="Removed in mature form" evidence="1">
    <location>
        <begin position="133"/>
        <end position="135"/>
    </location>
</feature>
<feature type="domain" description="Ubiquitin-like">
    <location>
        <begin position="23"/>
        <end position="92"/>
    </location>
</feature>
<feature type="region of interest" description="Disordered" evidence="2">
    <location>
        <begin position="1"/>
        <end position="20"/>
    </location>
</feature>
<feature type="modified residue" description="Cysteine methyl ester" evidence="3">
    <location>
        <position position="132"/>
    </location>
</feature>
<feature type="lipid moiety-binding region" description="S-geranylgeranyl cysteine" evidence="1">
    <location>
        <position position="132"/>
    </location>
</feature>
<comment type="function">
    <text evidence="1">May serve as docking site to facilitate the association of other proteins to the plasma membrane.</text>
</comment>
<comment type="subcellular location">
    <subcellularLocation>
        <location evidence="1">Cell membrane</location>
        <topology evidence="1">Lipid-anchor</topology>
    </subcellularLocation>
</comment>